<evidence type="ECO:0000255" key="1">
    <source>
        <dbReference type="HAMAP-Rule" id="MF_00736"/>
    </source>
</evidence>
<evidence type="ECO:0000305" key="2"/>
<dbReference type="EMBL" id="CP000854">
    <property type="protein sequence ID" value="ACC39429.1"/>
    <property type="molecule type" value="Genomic_DNA"/>
</dbReference>
<dbReference type="RefSeq" id="WP_011739001.1">
    <property type="nucleotide sequence ID" value="NC_010612.1"/>
</dbReference>
<dbReference type="SMR" id="B2HSH1"/>
<dbReference type="STRING" id="216594.MMAR_0973"/>
<dbReference type="KEGG" id="mmi:MMAR_0973"/>
<dbReference type="eggNOG" id="COG0080">
    <property type="taxonomic scope" value="Bacteria"/>
</dbReference>
<dbReference type="HOGENOM" id="CLU_074237_2_1_11"/>
<dbReference type="OrthoDB" id="9802408at2"/>
<dbReference type="Proteomes" id="UP000001190">
    <property type="component" value="Chromosome"/>
</dbReference>
<dbReference type="GO" id="GO:0022625">
    <property type="term" value="C:cytosolic large ribosomal subunit"/>
    <property type="evidence" value="ECO:0007669"/>
    <property type="project" value="TreeGrafter"/>
</dbReference>
<dbReference type="GO" id="GO:0070180">
    <property type="term" value="F:large ribosomal subunit rRNA binding"/>
    <property type="evidence" value="ECO:0007669"/>
    <property type="project" value="UniProtKB-UniRule"/>
</dbReference>
<dbReference type="GO" id="GO:0003735">
    <property type="term" value="F:structural constituent of ribosome"/>
    <property type="evidence" value="ECO:0007669"/>
    <property type="project" value="InterPro"/>
</dbReference>
<dbReference type="GO" id="GO:0006412">
    <property type="term" value="P:translation"/>
    <property type="evidence" value="ECO:0007669"/>
    <property type="project" value="UniProtKB-UniRule"/>
</dbReference>
<dbReference type="CDD" id="cd00349">
    <property type="entry name" value="Ribosomal_L11"/>
    <property type="match status" value="1"/>
</dbReference>
<dbReference type="FunFam" id="1.10.10.250:FF:000001">
    <property type="entry name" value="50S ribosomal protein L11"/>
    <property type="match status" value="1"/>
</dbReference>
<dbReference type="FunFam" id="3.30.1550.10:FF:000001">
    <property type="entry name" value="50S ribosomal protein L11"/>
    <property type="match status" value="1"/>
</dbReference>
<dbReference type="Gene3D" id="1.10.10.250">
    <property type="entry name" value="Ribosomal protein L11, C-terminal domain"/>
    <property type="match status" value="1"/>
</dbReference>
<dbReference type="Gene3D" id="3.30.1550.10">
    <property type="entry name" value="Ribosomal protein L11/L12, N-terminal domain"/>
    <property type="match status" value="1"/>
</dbReference>
<dbReference type="HAMAP" id="MF_00736">
    <property type="entry name" value="Ribosomal_uL11"/>
    <property type="match status" value="1"/>
</dbReference>
<dbReference type="InterPro" id="IPR000911">
    <property type="entry name" value="Ribosomal_uL11"/>
</dbReference>
<dbReference type="InterPro" id="IPR006519">
    <property type="entry name" value="Ribosomal_uL11_bac-typ"/>
</dbReference>
<dbReference type="InterPro" id="IPR020783">
    <property type="entry name" value="Ribosomal_uL11_C"/>
</dbReference>
<dbReference type="InterPro" id="IPR036769">
    <property type="entry name" value="Ribosomal_uL11_C_sf"/>
</dbReference>
<dbReference type="InterPro" id="IPR020785">
    <property type="entry name" value="Ribosomal_uL11_CS"/>
</dbReference>
<dbReference type="InterPro" id="IPR020784">
    <property type="entry name" value="Ribosomal_uL11_N"/>
</dbReference>
<dbReference type="InterPro" id="IPR036796">
    <property type="entry name" value="Ribosomal_uL11_N_sf"/>
</dbReference>
<dbReference type="NCBIfam" id="TIGR01632">
    <property type="entry name" value="L11_bact"/>
    <property type="match status" value="1"/>
</dbReference>
<dbReference type="PANTHER" id="PTHR11661">
    <property type="entry name" value="60S RIBOSOMAL PROTEIN L12"/>
    <property type="match status" value="1"/>
</dbReference>
<dbReference type="PANTHER" id="PTHR11661:SF1">
    <property type="entry name" value="LARGE RIBOSOMAL SUBUNIT PROTEIN UL11M"/>
    <property type="match status" value="1"/>
</dbReference>
<dbReference type="Pfam" id="PF00298">
    <property type="entry name" value="Ribosomal_L11"/>
    <property type="match status" value="1"/>
</dbReference>
<dbReference type="Pfam" id="PF03946">
    <property type="entry name" value="Ribosomal_L11_N"/>
    <property type="match status" value="1"/>
</dbReference>
<dbReference type="SMART" id="SM00649">
    <property type="entry name" value="RL11"/>
    <property type="match status" value="1"/>
</dbReference>
<dbReference type="SUPFAM" id="SSF54747">
    <property type="entry name" value="Ribosomal L11/L12e N-terminal domain"/>
    <property type="match status" value="1"/>
</dbReference>
<dbReference type="SUPFAM" id="SSF46906">
    <property type="entry name" value="Ribosomal protein L11, C-terminal domain"/>
    <property type="match status" value="1"/>
</dbReference>
<dbReference type="PROSITE" id="PS00359">
    <property type="entry name" value="RIBOSOMAL_L11"/>
    <property type="match status" value="1"/>
</dbReference>
<protein>
    <recommendedName>
        <fullName evidence="1">Large ribosomal subunit protein uL11</fullName>
    </recommendedName>
    <alternativeName>
        <fullName evidence="2">50S ribosomal protein L11</fullName>
    </alternativeName>
</protein>
<reference key="1">
    <citation type="journal article" date="2008" name="Genome Res.">
        <title>Insights from the complete genome sequence of Mycobacterium marinum on the evolution of Mycobacterium tuberculosis.</title>
        <authorList>
            <person name="Stinear T.P."/>
            <person name="Seemann T."/>
            <person name="Harrison P.F."/>
            <person name="Jenkin G.A."/>
            <person name="Davies J.K."/>
            <person name="Johnson P.D."/>
            <person name="Abdellah Z."/>
            <person name="Arrowsmith C."/>
            <person name="Chillingworth T."/>
            <person name="Churcher C."/>
            <person name="Clarke K."/>
            <person name="Cronin A."/>
            <person name="Davis P."/>
            <person name="Goodhead I."/>
            <person name="Holroyd N."/>
            <person name="Jagels K."/>
            <person name="Lord A."/>
            <person name="Moule S."/>
            <person name="Mungall K."/>
            <person name="Norbertczak H."/>
            <person name="Quail M.A."/>
            <person name="Rabbinowitsch E."/>
            <person name="Walker D."/>
            <person name="White B."/>
            <person name="Whitehead S."/>
            <person name="Small P.L."/>
            <person name="Brosch R."/>
            <person name="Ramakrishnan L."/>
            <person name="Fischbach M.A."/>
            <person name="Parkhill J."/>
            <person name="Cole S.T."/>
        </authorList>
    </citation>
    <scope>NUCLEOTIDE SEQUENCE [LARGE SCALE GENOMIC DNA]</scope>
    <source>
        <strain>ATCC BAA-535 / M</strain>
    </source>
</reference>
<proteinExistence type="inferred from homology"/>
<keyword id="KW-0488">Methylation</keyword>
<keyword id="KW-1185">Reference proteome</keyword>
<keyword id="KW-0687">Ribonucleoprotein</keyword>
<keyword id="KW-0689">Ribosomal protein</keyword>
<keyword id="KW-0694">RNA-binding</keyword>
<keyword id="KW-0699">rRNA-binding</keyword>
<organism>
    <name type="scientific">Mycobacterium marinum (strain ATCC BAA-535 / M)</name>
    <dbReference type="NCBI Taxonomy" id="216594"/>
    <lineage>
        <taxon>Bacteria</taxon>
        <taxon>Bacillati</taxon>
        <taxon>Actinomycetota</taxon>
        <taxon>Actinomycetes</taxon>
        <taxon>Mycobacteriales</taxon>
        <taxon>Mycobacteriaceae</taxon>
        <taxon>Mycobacterium</taxon>
        <taxon>Mycobacterium ulcerans group</taxon>
    </lineage>
</organism>
<accession>B2HSH1</accession>
<sequence>MAPKKKVAGLIKLQIVAGQANPAPPVGPALGQHGVNIMEFCKAYNAATESQRGTVIPVEITVYEDRSFTFALKTPPAAKLLLKAAGVAKGSAEPHKTKVAKVTWDQVREIAETKKTDLNANDIDAAAKIIAGTARSMGITVE</sequence>
<comment type="function">
    <text evidence="1">Forms part of the ribosomal stalk which helps the ribosome interact with GTP-bound translation factors.</text>
</comment>
<comment type="subunit">
    <text evidence="1">Part of the ribosomal stalk of the 50S ribosomal subunit. Interacts with L10 and the large rRNA to form the base of the stalk. L10 forms an elongated spine to which L12 dimers bind in a sequential fashion forming a multimeric L10(L12)X complex.</text>
</comment>
<comment type="PTM">
    <text evidence="1">One or more lysine residues are methylated.</text>
</comment>
<comment type="similarity">
    <text evidence="1">Belongs to the universal ribosomal protein uL11 family.</text>
</comment>
<feature type="chain" id="PRO_1000195676" description="Large ribosomal subunit protein uL11">
    <location>
        <begin position="1"/>
        <end position="142"/>
    </location>
</feature>
<gene>
    <name evidence="1" type="primary">rplK</name>
    <name type="ordered locus">MMAR_0973</name>
</gene>
<name>RL11_MYCMM</name>